<comment type="function">
    <text evidence="3 6 8 9 14">Small conductance calcium-activated potassium channel that mediates the voltage-independent transmembrane transfer of potassium across the cell membrane through a constitutive interaction with calmodulin which binds the intracellular calcium allowing its opening (PubMed:17142458, PubMed:8781233, PubMed:9287325). The current is characterized by a voltage-independent activation, an intracellular calcium concentration increase-dependent activation and a single-channel conductance of about 3 picosiemens (PubMed:8781233). Also presents an inwardly rectifying current, thus reducing its already small outward conductance of potassium ions, which is particularly the case when the membrane potential displays positive values, above + 20 mV (Probable). Activation is followed by membrane hyperpolarization (By similarity). Thought to regulate neuronal excitability by contributing to the slow component of synaptic afterhyperpolarization (By similarity).</text>
</comment>
<comment type="catalytic activity">
    <reaction evidence="6 8 9">
        <text>K(+)(in) = K(+)(out)</text>
        <dbReference type="Rhea" id="RHEA:29463"/>
        <dbReference type="ChEBI" id="CHEBI:29103"/>
    </reaction>
</comment>
<comment type="activity regulation">
    <text evidence="6 9">Inhibited by bee venom neurotoxin apamin (PubMed:17142458, PubMed:9287325). Inhibited by d-tubocurarine and tetraethylammonium (TEA) (PubMed:17142458, PubMed:9287325).</text>
</comment>
<comment type="subunit">
    <text evidence="2 3 7 9">Homodimer (PubMed:20689065). Heteromultimer with KCNN2 and KCNN3 (PubMed:20689065, PubMed:9287325). The complex is composed of 4 channel subunits each of which binds to a calmodulin subunit which regulates the channel activity through calcium-binding (By similarity). Interacts with calmodulin (By similarity).</text>
</comment>
<comment type="subcellular location">
    <subcellularLocation>
        <location evidence="4">Membrane</location>
        <topology evidence="4">Multi-pass membrane protein</topology>
    </subcellularLocation>
    <subcellularLocation>
        <location evidence="3">Cytoplasm</location>
        <location evidence="3">Myofibril</location>
        <location evidence="3">Sarcomere</location>
        <location evidence="3">Z line</location>
    </subcellularLocation>
</comment>
<comment type="alternative products">
    <event type="alternative splicing"/>
    <isoform>
        <id>Q92952-1</id>
        <name>1</name>
        <sequence type="displayed"/>
    </isoform>
    <isoform>
        <id>Q92952-2</id>
        <name>2</name>
        <sequence type="described" ref="VSP_022501"/>
    </isoform>
</comment>
<comment type="domain">
    <text evidence="7">The coiled-coil domaim mediates heteromeic assembly.</text>
</comment>
<comment type="similarity">
    <text evidence="13">Belongs to the potassium channel KCNN family. KCa2.1/KCNN1 subfamily.</text>
</comment>
<protein>
    <recommendedName>
        <fullName evidence="13">Small conductance calcium-activated potassium channel protein 1</fullName>
        <shortName evidence="10">SK1</shortName>
        <shortName>SKCa 1</shortName>
        <shortName>SKCa1</shortName>
        <shortName evidence="11">hSK1</shortName>
    </recommendedName>
    <alternativeName>
        <fullName>KCa2.1</fullName>
    </alternativeName>
</protein>
<organism>
    <name type="scientific">Homo sapiens</name>
    <name type="common">Human</name>
    <dbReference type="NCBI Taxonomy" id="9606"/>
    <lineage>
        <taxon>Eukaryota</taxon>
        <taxon>Metazoa</taxon>
        <taxon>Chordata</taxon>
        <taxon>Craniata</taxon>
        <taxon>Vertebrata</taxon>
        <taxon>Euteleostomi</taxon>
        <taxon>Mammalia</taxon>
        <taxon>Eutheria</taxon>
        <taxon>Euarchontoglires</taxon>
        <taxon>Primates</taxon>
        <taxon>Haplorrhini</taxon>
        <taxon>Catarrhini</taxon>
        <taxon>Hominidae</taxon>
        <taxon>Homo</taxon>
    </lineage>
</organism>
<accession>Q92952</accession>
<accession>Q5KR10</accession>
<accession>Q6DJU4</accession>
<keyword id="KW-0025">Alternative splicing</keyword>
<keyword id="KW-0112">Calmodulin-binding</keyword>
<keyword id="KW-0963">Cytoplasm</keyword>
<keyword id="KW-0407">Ion channel</keyword>
<keyword id="KW-0406">Ion transport</keyword>
<keyword id="KW-0472">Membrane</keyword>
<keyword id="KW-1267">Proteomics identification</keyword>
<keyword id="KW-1185">Reference proteome</keyword>
<keyword id="KW-0812">Transmembrane</keyword>
<keyword id="KW-1133">Transmembrane helix</keyword>
<keyword id="KW-0813">Transport</keyword>
<evidence type="ECO:0000250" key="1"/>
<evidence type="ECO:0000250" key="2">
    <source>
        <dbReference type="UniProtKB" id="P70604"/>
    </source>
</evidence>
<evidence type="ECO:0000250" key="3">
    <source>
        <dbReference type="UniProtKB" id="Q9EQR3"/>
    </source>
</evidence>
<evidence type="ECO:0000255" key="4"/>
<evidence type="ECO:0000256" key="5">
    <source>
        <dbReference type="SAM" id="MobiDB-lite"/>
    </source>
</evidence>
<evidence type="ECO:0000269" key="6">
    <source>
    </source>
</evidence>
<evidence type="ECO:0000269" key="7">
    <source>
    </source>
</evidence>
<evidence type="ECO:0000269" key="8">
    <source>
    </source>
</evidence>
<evidence type="ECO:0000269" key="9">
    <source>
    </source>
</evidence>
<evidence type="ECO:0000303" key="10">
    <source>
    </source>
</evidence>
<evidence type="ECO:0000303" key="11">
    <source>
    </source>
</evidence>
<evidence type="ECO:0000303" key="12">
    <source ref="3"/>
</evidence>
<evidence type="ECO:0000305" key="13"/>
<evidence type="ECO:0000305" key="14">
    <source>
    </source>
</evidence>
<evidence type="ECO:0000312" key="15">
    <source>
        <dbReference type="HGNC" id="HGNC:6290"/>
    </source>
</evidence>
<dbReference type="EMBL" id="U69883">
    <property type="protein sequence ID" value="AAB09562.1"/>
    <property type="molecule type" value="mRNA"/>
</dbReference>
<dbReference type="EMBL" id="AF131948">
    <property type="protein sequence ID" value="AAD37507.1"/>
    <property type="molecule type" value="Genomic_DNA"/>
</dbReference>
<dbReference type="EMBL" id="AF131940">
    <property type="protein sequence ID" value="AAD37507.1"/>
    <property type="status" value="JOINED"/>
    <property type="molecule type" value="Genomic_DNA"/>
</dbReference>
<dbReference type="EMBL" id="AF131941">
    <property type="protein sequence ID" value="AAD37507.1"/>
    <property type="status" value="JOINED"/>
    <property type="molecule type" value="Genomic_DNA"/>
</dbReference>
<dbReference type="EMBL" id="AF131942">
    <property type="protein sequence ID" value="AAD37507.1"/>
    <property type="status" value="JOINED"/>
    <property type="molecule type" value="Genomic_DNA"/>
</dbReference>
<dbReference type="EMBL" id="AF131943">
    <property type="protein sequence ID" value="AAD37507.1"/>
    <property type="status" value="JOINED"/>
    <property type="molecule type" value="Genomic_DNA"/>
</dbReference>
<dbReference type="EMBL" id="AF131944">
    <property type="protein sequence ID" value="AAD37507.1"/>
    <property type="status" value="JOINED"/>
    <property type="molecule type" value="Genomic_DNA"/>
</dbReference>
<dbReference type="EMBL" id="AF131945">
    <property type="protein sequence ID" value="AAD37507.1"/>
    <property type="status" value="JOINED"/>
    <property type="molecule type" value="Genomic_DNA"/>
</dbReference>
<dbReference type="EMBL" id="AF131946">
    <property type="protein sequence ID" value="AAD37507.1"/>
    <property type="status" value="JOINED"/>
    <property type="molecule type" value="Genomic_DNA"/>
</dbReference>
<dbReference type="EMBL" id="AF131947">
    <property type="protein sequence ID" value="AAD37507.1"/>
    <property type="status" value="JOINED"/>
    <property type="molecule type" value="Genomic_DNA"/>
</dbReference>
<dbReference type="EMBL" id="AB198191">
    <property type="protein sequence ID" value="BAD86831.1"/>
    <property type="molecule type" value="mRNA"/>
</dbReference>
<dbReference type="EMBL" id="BC075037">
    <property type="protein sequence ID" value="AAH75037.3"/>
    <property type="molecule type" value="mRNA"/>
</dbReference>
<dbReference type="CCDS" id="CCDS67611.1">
    <molecule id="Q92952-1"/>
</dbReference>
<dbReference type="RefSeq" id="NP_001373903.1">
    <molecule id="Q92952-1"/>
    <property type="nucleotide sequence ID" value="NM_001386974.1"/>
</dbReference>
<dbReference type="RefSeq" id="NP_002239.2">
    <molecule id="Q92952-1"/>
    <property type="nucleotide sequence ID" value="NM_002248.4"/>
</dbReference>
<dbReference type="SMR" id="Q92952"/>
<dbReference type="BioGRID" id="109981">
    <property type="interactions" value="7"/>
</dbReference>
<dbReference type="FunCoup" id="Q92952">
    <property type="interactions" value="144"/>
</dbReference>
<dbReference type="IntAct" id="Q92952">
    <property type="interactions" value="4"/>
</dbReference>
<dbReference type="MINT" id="Q92952"/>
<dbReference type="STRING" id="9606.ENSP00000476519"/>
<dbReference type="BindingDB" id="Q92952"/>
<dbReference type="ChEMBL" id="CHEMBL2369"/>
<dbReference type="DrugBank" id="DB02587">
    <property type="generic name" value="Colforsin"/>
</dbReference>
<dbReference type="DrugBank" id="DB04209">
    <property type="generic name" value="Dequalinium"/>
</dbReference>
<dbReference type="DrugBank" id="DB01110">
    <property type="generic name" value="Miconazole"/>
</dbReference>
<dbReference type="DrugBank" id="DB01054">
    <property type="generic name" value="Nitrendipine"/>
</dbReference>
<dbReference type="DrugBank" id="DB00721">
    <property type="generic name" value="Procaine"/>
</dbReference>
<dbReference type="DrugBank" id="DB16733">
    <property type="generic name" value="Rimtuzalcap"/>
</dbReference>
<dbReference type="DrugBank" id="DB00867">
    <property type="generic name" value="Ritodrine"/>
</dbReference>
<dbReference type="DrugBank" id="DB08837">
    <property type="generic name" value="Tetraethylammonium"/>
</dbReference>
<dbReference type="DrugBank" id="DB09089">
    <property type="generic name" value="Trimebutine"/>
</dbReference>
<dbReference type="DrugCentral" id="Q92952"/>
<dbReference type="GuidetoPHARMACOLOGY" id="381"/>
<dbReference type="TCDB" id="1.A.1.16.6">
    <property type="family name" value="the voltage-gated ion channel (vic) superfamily"/>
</dbReference>
<dbReference type="iPTMnet" id="Q92952"/>
<dbReference type="PhosphoSitePlus" id="Q92952"/>
<dbReference type="BioMuta" id="KCNN1"/>
<dbReference type="DMDM" id="124056468"/>
<dbReference type="MassIVE" id="Q92952"/>
<dbReference type="PaxDb" id="9606-ENSP00000476519"/>
<dbReference type="PeptideAtlas" id="Q92952"/>
<dbReference type="ProteomicsDB" id="75621">
    <molecule id="Q92952-1"/>
</dbReference>
<dbReference type="ProteomicsDB" id="75622">
    <molecule id="Q92952-2"/>
</dbReference>
<dbReference type="Antibodypedia" id="27885">
    <property type="antibodies" value="121 antibodies from 24 providers"/>
</dbReference>
<dbReference type="DNASU" id="3780"/>
<dbReference type="Ensembl" id="ENST00000222249.13">
    <molecule id="Q92952-1"/>
    <property type="protein sequence ID" value="ENSP00000476519.1"/>
    <property type="gene ID" value="ENSG00000105642.16"/>
</dbReference>
<dbReference type="Ensembl" id="ENST00000684775.1">
    <molecule id="Q92952-1"/>
    <property type="protein sequence ID" value="ENSP00000507021.1"/>
    <property type="gene ID" value="ENSG00000105642.16"/>
</dbReference>
<dbReference type="GeneID" id="3780"/>
<dbReference type="KEGG" id="hsa:3780"/>
<dbReference type="MANE-Select" id="ENST00000684775.1">
    <property type="protein sequence ID" value="ENSP00000507021.1"/>
    <property type="RefSeq nucleotide sequence ID" value="NM_001386974.1"/>
    <property type="RefSeq protein sequence ID" value="NP_001373903.1"/>
</dbReference>
<dbReference type="UCSC" id="uc002nht.4">
    <molecule id="Q92952-1"/>
    <property type="organism name" value="human"/>
</dbReference>
<dbReference type="AGR" id="HGNC:6290"/>
<dbReference type="CTD" id="3780"/>
<dbReference type="DisGeNET" id="3780"/>
<dbReference type="GeneCards" id="KCNN1"/>
<dbReference type="HGNC" id="HGNC:6290">
    <property type="gene designation" value="KCNN1"/>
</dbReference>
<dbReference type="HPA" id="ENSG00000105642">
    <property type="expression patterns" value="Tissue enriched (brain)"/>
</dbReference>
<dbReference type="MIM" id="602982">
    <property type="type" value="gene"/>
</dbReference>
<dbReference type="neXtProt" id="NX_Q92952"/>
<dbReference type="OpenTargets" id="ENSG00000105642"/>
<dbReference type="PharmGKB" id="PA30070"/>
<dbReference type="VEuPathDB" id="HostDB:ENSG00000105642"/>
<dbReference type="eggNOG" id="KOG3684">
    <property type="taxonomic scope" value="Eukaryota"/>
</dbReference>
<dbReference type="GeneTree" id="ENSGT00950000182904"/>
<dbReference type="HOGENOM" id="CLU_014617_5_0_1"/>
<dbReference type="InParanoid" id="Q92952"/>
<dbReference type="OrthoDB" id="73653at2759"/>
<dbReference type="PAN-GO" id="Q92952">
    <property type="GO annotations" value="6 GO annotations based on evolutionary models"/>
</dbReference>
<dbReference type="PhylomeDB" id="Q92952"/>
<dbReference type="TreeFam" id="TF315015"/>
<dbReference type="PathwayCommons" id="Q92952"/>
<dbReference type="Reactome" id="R-HSA-1296052">
    <property type="pathway name" value="Ca2+ activated K+ channels"/>
</dbReference>
<dbReference type="SignaLink" id="Q92952"/>
<dbReference type="SIGNOR" id="Q92952"/>
<dbReference type="BioGRID-ORCS" id="3780">
    <property type="hits" value="13 hits in 1096 CRISPR screens"/>
</dbReference>
<dbReference type="ChiTaRS" id="KCNN1">
    <property type="organism name" value="human"/>
</dbReference>
<dbReference type="GeneWiki" id="KCNN1"/>
<dbReference type="GenomeRNAi" id="3780"/>
<dbReference type="Pharos" id="Q92952">
    <property type="development level" value="Tchem"/>
</dbReference>
<dbReference type="PRO" id="PR:Q92952"/>
<dbReference type="Proteomes" id="UP000005640">
    <property type="component" value="Chromosome 19"/>
</dbReference>
<dbReference type="RNAct" id="Q92952">
    <property type="molecule type" value="protein"/>
</dbReference>
<dbReference type="Bgee" id="ENSG00000105642">
    <property type="expression patterns" value="Expressed in right frontal lobe and 130 other cell types or tissues"/>
</dbReference>
<dbReference type="ExpressionAtlas" id="Q92952">
    <property type="expression patterns" value="baseline and differential"/>
</dbReference>
<dbReference type="GO" id="GO:0043005">
    <property type="term" value="C:neuron projection"/>
    <property type="evidence" value="ECO:0000318"/>
    <property type="project" value="GO_Central"/>
</dbReference>
<dbReference type="GO" id="GO:0043025">
    <property type="term" value="C:neuronal cell body"/>
    <property type="evidence" value="ECO:0000318"/>
    <property type="project" value="GO_Central"/>
</dbReference>
<dbReference type="GO" id="GO:0005886">
    <property type="term" value="C:plasma membrane"/>
    <property type="evidence" value="ECO:0000318"/>
    <property type="project" value="GO_Central"/>
</dbReference>
<dbReference type="GO" id="GO:0045202">
    <property type="term" value="C:synapse"/>
    <property type="evidence" value="ECO:0007669"/>
    <property type="project" value="GOC"/>
</dbReference>
<dbReference type="GO" id="GO:0008076">
    <property type="term" value="C:voltage-gated potassium channel complex"/>
    <property type="evidence" value="ECO:0000304"/>
    <property type="project" value="ProtInc"/>
</dbReference>
<dbReference type="GO" id="GO:0030018">
    <property type="term" value="C:Z disc"/>
    <property type="evidence" value="ECO:0007669"/>
    <property type="project" value="UniProtKB-SubCell"/>
</dbReference>
<dbReference type="GO" id="GO:0015269">
    <property type="term" value="F:calcium-activated potassium channel activity"/>
    <property type="evidence" value="ECO:0000304"/>
    <property type="project" value="ProtInc"/>
</dbReference>
<dbReference type="GO" id="GO:0005516">
    <property type="term" value="F:calmodulin binding"/>
    <property type="evidence" value="ECO:0000318"/>
    <property type="project" value="GO_Central"/>
</dbReference>
<dbReference type="GO" id="GO:0005242">
    <property type="term" value="F:inward rectifier potassium channel activity"/>
    <property type="evidence" value="ECO:0000314"/>
    <property type="project" value="UniProtKB"/>
</dbReference>
<dbReference type="GO" id="GO:0016286">
    <property type="term" value="F:small conductance calcium-activated potassium channel activity"/>
    <property type="evidence" value="ECO:0000314"/>
    <property type="project" value="UniProtKB"/>
</dbReference>
<dbReference type="GO" id="GO:0007268">
    <property type="term" value="P:chemical synaptic transmission"/>
    <property type="evidence" value="ECO:0000304"/>
    <property type="project" value="ProtInc"/>
</dbReference>
<dbReference type="GO" id="GO:0071805">
    <property type="term" value="P:potassium ion transmembrane transport"/>
    <property type="evidence" value="ECO:0000314"/>
    <property type="project" value="UniProtKB"/>
</dbReference>
<dbReference type="GO" id="GO:0006813">
    <property type="term" value="P:potassium ion transport"/>
    <property type="evidence" value="ECO:0000304"/>
    <property type="project" value="UniProtKB"/>
</dbReference>
<dbReference type="FunFam" id="1.10.287.70:FF:000022">
    <property type="entry name" value="Small conductance calcium-activated potassium channel, isoform O"/>
    <property type="match status" value="1"/>
</dbReference>
<dbReference type="FunFam" id="1.10.287.70:FF:000027">
    <property type="entry name" value="Small conductance calcium-activated potassium channel, isoform O"/>
    <property type="match status" value="1"/>
</dbReference>
<dbReference type="Gene3D" id="1.10.287.70">
    <property type="match status" value="2"/>
</dbReference>
<dbReference type="InterPro" id="IPR004178">
    <property type="entry name" value="CaM-bd_dom"/>
</dbReference>
<dbReference type="InterPro" id="IPR036122">
    <property type="entry name" value="CaM-bd_dom_sf"/>
</dbReference>
<dbReference type="InterPro" id="IPR015449">
    <property type="entry name" value="K_chnl_Ca-activ_SK"/>
</dbReference>
<dbReference type="InterPro" id="IPR013099">
    <property type="entry name" value="K_chnl_dom"/>
</dbReference>
<dbReference type="PANTHER" id="PTHR10153">
    <property type="entry name" value="SMALL CONDUCTANCE CALCIUM-ACTIVATED POTASSIUM CHANNEL"/>
    <property type="match status" value="1"/>
</dbReference>
<dbReference type="Pfam" id="PF02888">
    <property type="entry name" value="CaMBD"/>
    <property type="match status" value="1"/>
</dbReference>
<dbReference type="Pfam" id="PF07885">
    <property type="entry name" value="Ion_trans_2"/>
    <property type="match status" value="1"/>
</dbReference>
<dbReference type="Pfam" id="PF03530">
    <property type="entry name" value="SK_channel"/>
    <property type="match status" value="1"/>
</dbReference>
<dbReference type="PRINTS" id="PR01451">
    <property type="entry name" value="SKCHANNEL"/>
</dbReference>
<dbReference type="SMART" id="SM01053">
    <property type="entry name" value="CaMBD"/>
    <property type="match status" value="1"/>
</dbReference>
<dbReference type="SUPFAM" id="SSF81327">
    <property type="entry name" value="Small-conductance potassium channel"/>
    <property type="match status" value="1"/>
</dbReference>
<dbReference type="SUPFAM" id="SSF81324">
    <property type="entry name" value="Voltage-gated potassium channels"/>
    <property type="match status" value="1"/>
</dbReference>
<gene>
    <name evidence="10 15" type="primary">KCNN1</name>
    <name type="synonym">SK</name>
</gene>
<reference key="1">
    <citation type="journal article" date="1996" name="Science">
        <title>Small-conductance, calcium-activated potassium channels from mammalian brain.</title>
        <authorList>
            <person name="Koehler M."/>
            <person name="Hirschberg B."/>
            <person name="Bond C.T."/>
            <person name="Kinzie J.M."/>
            <person name="Marrion N.V."/>
            <person name="Maylie J."/>
            <person name="Adelman J.P."/>
        </authorList>
    </citation>
    <scope>NUCLEOTIDE SEQUENCE [MRNA] (ISOFORM 2)</scope>
    <scope>FUNCTION</scope>
    <scope>TRANSPORTER ACTIVITY</scope>
    <source>
        <tissue>Hippocampus</tissue>
    </source>
</reference>
<reference key="2">
    <citation type="journal article" date="1999" name="Cytogenet. Cell Genet.">
        <title>Gene structure and chromosome mapping of the human small-conductance calcium-activated potassium channel SK1 gene (KCNN1).</title>
        <authorList>
            <person name="Litt M."/>
            <person name="LaMorticella D."/>
            <person name="Bond C.T."/>
            <person name="Adelman J.P."/>
        </authorList>
    </citation>
    <scope>NUCLEOTIDE SEQUENCE [GENOMIC DNA]</scope>
</reference>
<reference key="3">
    <citation type="submission" date="2005-01" db="EMBL/GenBank/DDBJ databases">
        <title>Molecular cloning of a small-conductance calcium-activated potassium channel from human fetal brain.</title>
        <authorList>
            <person name="Tagaya M."/>
            <person name="Higashioka M."/>
            <person name="Takagaki K."/>
            <person name="Ohgi T."/>
        </authorList>
    </citation>
    <scope>NUCLEOTIDE SEQUENCE [MRNA] (ISOFORM 2)</scope>
    <source>
        <tissue>Fetal brain</tissue>
    </source>
</reference>
<reference key="4">
    <citation type="journal article" date="2004" name="Genome Res.">
        <title>The status, quality, and expansion of the NIH full-length cDNA project: the Mammalian Gene Collection (MGC).</title>
        <authorList>
            <consortium name="The MGC Project Team"/>
        </authorList>
    </citation>
    <scope>NUCLEOTIDE SEQUENCE [LARGE SCALE MRNA] (ISOFORM 1)</scope>
    <source>
        <tissue>Fetal brain</tissue>
    </source>
</reference>
<reference key="5">
    <citation type="journal article" date="1997" name="J. Biol. Chem.">
        <title>Determinants of apamin and d-tubocurarine block in SK potassium channels.</title>
        <authorList>
            <person name="Ishii T.M."/>
            <person name="Maylie J."/>
            <person name="Adelman J.P."/>
        </authorList>
    </citation>
    <scope>FUNCTION</scope>
    <scope>TRANSPORTER ACTIVITY</scope>
    <scope>ACTIVITY REGULATION</scope>
    <scope>SUBUNIT</scope>
    <scope>MUTAGENESIS OF LYS-310; GLU-312; VAL-337 AND HIS-339</scope>
</reference>
<reference key="6">
    <citation type="journal article" date="2007" name="J. Biol. Chem.">
        <title>An amino acid outside the pore region influences apamin sensitivity in small conductance Ca2+-activated K+ channels.</title>
        <authorList>
            <person name="Nolting A."/>
            <person name="Ferraro T."/>
            <person name="D'hoedt D."/>
            <person name="Stocker M."/>
        </authorList>
    </citation>
    <scope>FUNCTION</scope>
    <scope>TRANSPORTER ACTIVITY</scope>
    <scope>ACTIVITY REGULATION</scope>
    <scope>MUTAGENESIS OF THR-216; LYS-310; GLU-312 AND HIS-339</scope>
</reference>
<reference key="7">
    <citation type="journal article" date="2010" name="Circ. Res.">
        <title>Cardiac small conductance Ca2+-activated K+ channel subunits form heteromultimers via the coiled-coil domains in the C termini of the channels.</title>
        <authorList>
            <person name="Tuteja D."/>
            <person name="Rafizadeh S."/>
            <person name="Timofeyev V."/>
            <person name="Wang S."/>
            <person name="Zhang Z."/>
            <person name="Li N."/>
            <person name="Mateo R.K."/>
            <person name="Singapuri A."/>
            <person name="Young J.N."/>
            <person name="Knowlton A.A."/>
            <person name="Chiamvimonvat N."/>
        </authorList>
    </citation>
    <scope>SUBUNIT</scope>
    <scope>DOMAIN</scope>
    <scope>MUTAGENESIS OF 332-GLY--GLY-334</scope>
</reference>
<sequence>MNSHSYNGSVGRPLGSGPGALGRDPPDPEAGHPPQPPHSPGLQVVVAKSEPARPSPGSPRGQPQDQDDDEDDEEDEAGRQRASGKPSNVGHRLGHRRALFEKRKRLSDYALIFGMFGIVVMVTETELSWGVYTKESLYSFALKCLISLSTAILLGLVVLYHAREIQLFMVDNGADDWRIAMTCERVFLISLELAVCAIHPVPGHYRFTWTARLAFTYAPSVAEADVDVLLSIPMFLRLYLLGRVMLLHSKIFTDASSRSIGALNKITFNTRFVMKTLMTICPGTVLLVFSISSWIIAAWTVRVCERYHDKQEVTSNFLGAMWLISITFLSIGYGDMVPHTYCGKGVCLLTGIMGAGCTALVVAVVARKLELTKAEKHVHNFMMDTQLTKRVKNAAANVLRETWLIYKHTRLVKKPDQARVRKHQRKFLQAIHQAQKLRSVKIEQGKLNDQANTLTDLAKTQTVMYDLVSELHAQHEELEARLATLESRLDALGASLQALPGLIAQAIRPPPPPLPPRPGPGPQDQAARSSPCRWTPVAPSDCG</sequence>
<feature type="chain" id="PRO_0000155007" description="Small conductance calcium-activated potassium channel protein 1">
    <location>
        <begin position="1"/>
        <end position="543"/>
    </location>
</feature>
<feature type="transmembrane region" description="Helical; Name=Segment S1" evidence="4">
    <location>
        <begin position="111"/>
        <end position="131"/>
    </location>
</feature>
<feature type="transmembrane region" description="Helical; Name=Segment S2" evidence="4">
    <location>
        <begin position="140"/>
        <end position="160"/>
    </location>
</feature>
<feature type="transmembrane region" description="Helical; Name=Segment S3" evidence="4">
    <location>
        <begin position="179"/>
        <end position="199"/>
    </location>
</feature>
<feature type="transmembrane region" description="Helical; Name=Segment S4" evidence="4">
    <location>
        <begin position="228"/>
        <end position="248"/>
    </location>
</feature>
<feature type="transmembrane region" description="Helical; Name=Segment S5" evidence="4">
    <location>
        <begin position="277"/>
        <end position="297"/>
    </location>
</feature>
<feature type="intramembrane region" description="Pore-forming; Name=Segment H5" evidence="4">
    <location>
        <begin position="317"/>
        <end position="337"/>
    </location>
</feature>
<feature type="transmembrane region" description="Helical; Name=Segment S6" evidence="4">
    <location>
        <begin position="346"/>
        <end position="366"/>
    </location>
</feature>
<feature type="region of interest" description="Disordered" evidence="5">
    <location>
        <begin position="1"/>
        <end position="92"/>
    </location>
</feature>
<feature type="region of interest" description="Calmodulin-binding" evidence="1">
    <location>
        <begin position="384"/>
        <end position="463"/>
    </location>
</feature>
<feature type="region of interest" description="Disordered" evidence="5">
    <location>
        <begin position="505"/>
        <end position="543"/>
    </location>
</feature>
<feature type="compositionally biased region" description="Acidic residues" evidence="5">
    <location>
        <begin position="65"/>
        <end position="76"/>
    </location>
</feature>
<feature type="compositionally biased region" description="Pro residues" evidence="5">
    <location>
        <begin position="508"/>
        <end position="521"/>
    </location>
</feature>
<feature type="splice variant" id="VSP_022501" description="In isoform 2." evidence="11 12">
    <original>M</original>
    <variation>MPGPRAACSEPNPCTQVVM</variation>
    <location>
        <position position="1"/>
    </location>
</feature>
<feature type="mutagenesis site" description="Significantly increased inhibition by apamin (IC(50)=167 pM). No effect on inhibition by d-tubocurarine and tetraethylammonium (TEA). Significant increase in inhibition by apamin (IC(50)=26 pM); when associated with Q-310, D-312 and N-339." evidence="6">
    <original>T</original>
    <variation>S</variation>
    <location>
        <position position="216"/>
    </location>
</feature>
<feature type="mutagenesis site" description="Loss of inhibition by apamin. No effect on inhibition by d-tubocurarine. Increased inhibition by apamin; when associated with D-312. Significant increase in inhibition by apamin (IC(50)=366 pM); when associated with D-312 and N-339. Significant increase in inhibition by apamin (IC(50)=26 pM); when associated with S-216, D-312 and N-339." evidence="6 9">
    <original>K</original>
    <variation>Q</variation>
    <location>
        <position position="310"/>
    </location>
</feature>
<feature type="mutagenesis site" description="Increased inhibition by apamin or d-tubocurarine (IC(50)=62.6 uM). Additive increase in inhibition by apamin or d-tubocurarine (IC(50)=6.3 uM); when associated with N-339. Additive increase in inhibition by apamin; when associated with Q-310. Significant increase in inhibition by apamin (IC(50)=366 pM); when associated with Q-310 and N-339. Significant increase in inhibition by apamin (IC(50)=26 pM); when associated with S-216, Q-310 and N-339." evidence="6 9">
    <original>E</original>
    <variation>D</variation>
    <location>
        <position position="312"/>
    </location>
</feature>
<feature type="mutagenesis site" description="Impairs small conductance calcium-activated potassium channel activity of KCNN2." evidence="7">
    <original>GYG</original>
    <variation>AAA</variation>
    <location>
        <begin position="332"/>
        <end position="334"/>
    </location>
</feature>
<feature type="mutagenesis site" description="Increased inhibition by tetraethylammonium (TEA)." evidence="9">
    <original>V</original>
    <variation>Y</variation>
    <location>
        <position position="337"/>
    </location>
</feature>
<feature type="mutagenesis site" description="Increased inhibition by apamin or d-tubocurarine (IC(50)=11.1 uM). Additive increase in inhibition by apamin or d-tubocurarine (IC(50)=6.3 uM); when associated with D-312. Significant increase in inhibition by apamin (IC(50)=366 pM); when associated with Q-310 and D-312. Significant increase in inhibition by apamin (IC(50)=26 pM); when associated with S-216, Q-310 and D-312." evidence="6 9">
    <original>H</original>
    <variation>N</variation>
    <location>
        <position position="339"/>
    </location>
</feature>
<feature type="sequence conflict" description="In Ref. 3; BAD86831." evidence="13" ref="3">
    <original>PLPPRPGPGPQDQAARSSPCRWTPVAPSDC</original>
    <variation>RLPRQRAGLDH</variation>
    <location>
        <begin position="513"/>
        <end position="542"/>
    </location>
</feature>
<name>KCNN1_HUMAN</name>
<proteinExistence type="evidence at protein level"/>